<evidence type="ECO:0000255" key="1">
    <source>
        <dbReference type="HAMAP-Rule" id="MF_00372"/>
    </source>
</evidence>
<dbReference type="EC" id="3.5.2.7" evidence="1"/>
<dbReference type="EMBL" id="CP000380">
    <property type="protein sequence ID" value="ABF80774.1"/>
    <property type="molecule type" value="Genomic_DNA"/>
</dbReference>
<dbReference type="SMR" id="Q1BHY1"/>
<dbReference type="HOGENOM" id="CLU_041647_0_0_4"/>
<dbReference type="UniPathway" id="UPA00379">
    <property type="reaction ID" value="UER00551"/>
</dbReference>
<dbReference type="GO" id="GO:0005737">
    <property type="term" value="C:cytoplasm"/>
    <property type="evidence" value="ECO:0007669"/>
    <property type="project" value="UniProtKB-SubCell"/>
</dbReference>
<dbReference type="GO" id="GO:0050480">
    <property type="term" value="F:imidazolonepropionase activity"/>
    <property type="evidence" value="ECO:0007669"/>
    <property type="project" value="UniProtKB-UniRule"/>
</dbReference>
<dbReference type="GO" id="GO:0005506">
    <property type="term" value="F:iron ion binding"/>
    <property type="evidence" value="ECO:0007669"/>
    <property type="project" value="UniProtKB-UniRule"/>
</dbReference>
<dbReference type="GO" id="GO:0008270">
    <property type="term" value="F:zinc ion binding"/>
    <property type="evidence" value="ECO:0007669"/>
    <property type="project" value="UniProtKB-UniRule"/>
</dbReference>
<dbReference type="GO" id="GO:0019556">
    <property type="term" value="P:L-histidine catabolic process to glutamate and formamide"/>
    <property type="evidence" value="ECO:0007669"/>
    <property type="project" value="UniProtKB-UniPathway"/>
</dbReference>
<dbReference type="GO" id="GO:0019557">
    <property type="term" value="P:L-histidine catabolic process to glutamate and formate"/>
    <property type="evidence" value="ECO:0007669"/>
    <property type="project" value="UniProtKB-UniPathway"/>
</dbReference>
<dbReference type="CDD" id="cd01296">
    <property type="entry name" value="Imidazolone-5PH"/>
    <property type="match status" value="1"/>
</dbReference>
<dbReference type="FunFam" id="3.20.20.140:FF:000007">
    <property type="entry name" value="Imidazolonepropionase"/>
    <property type="match status" value="1"/>
</dbReference>
<dbReference type="Gene3D" id="3.20.20.140">
    <property type="entry name" value="Metal-dependent hydrolases"/>
    <property type="match status" value="1"/>
</dbReference>
<dbReference type="Gene3D" id="2.30.40.10">
    <property type="entry name" value="Urease, subunit C, domain 1"/>
    <property type="match status" value="1"/>
</dbReference>
<dbReference type="HAMAP" id="MF_00372">
    <property type="entry name" value="HutI"/>
    <property type="match status" value="1"/>
</dbReference>
<dbReference type="InterPro" id="IPR006680">
    <property type="entry name" value="Amidohydro-rel"/>
</dbReference>
<dbReference type="InterPro" id="IPR005920">
    <property type="entry name" value="HutI"/>
</dbReference>
<dbReference type="InterPro" id="IPR011059">
    <property type="entry name" value="Metal-dep_hydrolase_composite"/>
</dbReference>
<dbReference type="InterPro" id="IPR032466">
    <property type="entry name" value="Metal_Hydrolase"/>
</dbReference>
<dbReference type="NCBIfam" id="TIGR01224">
    <property type="entry name" value="hutI"/>
    <property type="match status" value="1"/>
</dbReference>
<dbReference type="PANTHER" id="PTHR42752">
    <property type="entry name" value="IMIDAZOLONEPROPIONASE"/>
    <property type="match status" value="1"/>
</dbReference>
<dbReference type="PANTHER" id="PTHR42752:SF1">
    <property type="entry name" value="IMIDAZOLONEPROPIONASE-RELATED"/>
    <property type="match status" value="1"/>
</dbReference>
<dbReference type="Pfam" id="PF01979">
    <property type="entry name" value="Amidohydro_1"/>
    <property type="match status" value="1"/>
</dbReference>
<dbReference type="SUPFAM" id="SSF51338">
    <property type="entry name" value="Composite domain of metallo-dependent hydrolases"/>
    <property type="match status" value="1"/>
</dbReference>
<dbReference type="SUPFAM" id="SSF51556">
    <property type="entry name" value="Metallo-dependent hydrolases"/>
    <property type="match status" value="1"/>
</dbReference>
<sequence>MKPTVWHHLRLCPHGHPDETIDDAAIAVDETGTIAWLGALSALPHGYAHWQREDLHGAWVTPGLVDCHTHLVYGGTRADEFAQRLAGVSYEEIARQGGGIVSTVRATRAADETTLFVQAAARLQPLLAEGVTAIEIKSGYGLDLASERKMLRVARQLGERFPVTVYTTFLGAHALPPEYAGRADEYIDEVCDRMLPTLADEGLVDAVDVFCERIGFSLAQTERVFEAATRRGLPVKLHAEQLSNAGGTALAARYRALSADHLEFLDEAGIEAMKAAGTVAVLLPGAYYFIRETQLPPIDLLRKHGVPIALATDHNPGTSPLESLLLTLNMGCTLFRMTVPEVLQGVTRHAAAALGRADRHGALEVGRQADFAAWSVGSLAELAYWIGRPLCEQVVRGGTPVFRRMNG</sequence>
<proteinExistence type="inferred from homology"/>
<organism>
    <name type="scientific">Burkholderia orbicola (strain AU 1054)</name>
    <dbReference type="NCBI Taxonomy" id="331271"/>
    <lineage>
        <taxon>Bacteria</taxon>
        <taxon>Pseudomonadati</taxon>
        <taxon>Pseudomonadota</taxon>
        <taxon>Betaproteobacteria</taxon>
        <taxon>Burkholderiales</taxon>
        <taxon>Burkholderiaceae</taxon>
        <taxon>Burkholderia</taxon>
        <taxon>Burkholderia cepacia complex</taxon>
        <taxon>Burkholderia orbicola</taxon>
    </lineage>
</organism>
<name>HUTI_BURO1</name>
<keyword id="KW-0963">Cytoplasm</keyword>
<keyword id="KW-0369">Histidine metabolism</keyword>
<keyword id="KW-0378">Hydrolase</keyword>
<keyword id="KW-0408">Iron</keyword>
<keyword id="KW-0479">Metal-binding</keyword>
<keyword id="KW-0862">Zinc</keyword>
<protein>
    <recommendedName>
        <fullName evidence="1">Imidazolonepropionase</fullName>
        <ecNumber evidence="1">3.5.2.7</ecNumber>
    </recommendedName>
    <alternativeName>
        <fullName evidence="1">Imidazolone-5-propionate hydrolase</fullName>
    </alternativeName>
</protein>
<accession>Q1BHY1</accession>
<feature type="chain" id="PRO_0000306446" description="Imidazolonepropionase">
    <location>
        <begin position="1"/>
        <end position="407"/>
    </location>
</feature>
<feature type="binding site" evidence="1">
    <location>
        <position position="68"/>
    </location>
    <ligand>
        <name>Fe(3+)</name>
        <dbReference type="ChEBI" id="CHEBI:29034"/>
    </ligand>
</feature>
<feature type="binding site" evidence="1">
    <location>
        <position position="68"/>
    </location>
    <ligand>
        <name>Zn(2+)</name>
        <dbReference type="ChEBI" id="CHEBI:29105"/>
    </ligand>
</feature>
<feature type="binding site" evidence="1">
    <location>
        <position position="70"/>
    </location>
    <ligand>
        <name>Fe(3+)</name>
        <dbReference type="ChEBI" id="CHEBI:29034"/>
    </ligand>
</feature>
<feature type="binding site" evidence="1">
    <location>
        <position position="70"/>
    </location>
    <ligand>
        <name>Zn(2+)</name>
        <dbReference type="ChEBI" id="CHEBI:29105"/>
    </ligand>
</feature>
<feature type="binding site" evidence="1">
    <location>
        <position position="77"/>
    </location>
    <ligand>
        <name>4-imidazolone-5-propanoate</name>
        <dbReference type="ChEBI" id="CHEBI:77893"/>
    </ligand>
</feature>
<feature type="binding site" evidence="1">
    <location>
        <position position="140"/>
    </location>
    <ligand>
        <name>4-imidazolone-5-propanoate</name>
        <dbReference type="ChEBI" id="CHEBI:77893"/>
    </ligand>
</feature>
<feature type="binding site" evidence="1">
    <location>
        <position position="140"/>
    </location>
    <ligand>
        <name>N-formimidoyl-L-glutamate</name>
        <dbReference type="ChEBI" id="CHEBI:58928"/>
    </ligand>
</feature>
<feature type="binding site" evidence="1">
    <location>
        <position position="173"/>
    </location>
    <ligand>
        <name>4-imidazolone-5-propanoate</name>
        <dbReference type="ChEBI" id="CHEBI:77893"/>
    </ligand>
</feature>
<feature type="binding site" evidence="1">
    <location>
        <position position="238"/>
    </location>
    <ligand>
        <name>Fe(3+)</name>
        <dbReference type="ChEBI" id="CHEBI:29034"/>
    </ligand>
</feature>
<feature type="binding site" evidence="1">
    <location>
        <position position="238"/>
    </location>
    <ligand>
        <name>Zn(2+)</name>
        <dbReference type="ChEBI" id="CHEBI:29105"/>
    </ligand>
</feature>
<feature type="binding site" evidence="1">
    <location>
        <position position="241"/>
    </location>
    <ligand>
        <name>4-imidazolone-5-propanoate</name>
        <dbReference type="ChEBI" id="CHEBI:77893"/>
    </ligand>
</feature>
<feature type="binding site" evidence="1">
    <location>
        <position position="313"/>
    </location>
    <ligand>
        <name>Fe(3+)</name>
        <dbReference type="ChEBI" id="CHEBI:29034"/>
    </ligand>
</feature>
<feature type="binding site" evidence="1">
    <location>
        <position position="313"/>
    </location>
    <ligand>
        <name>Zn(2+)</name>
        <dbReference type="ChEBI" id="CHEBI:29105"/>
    </ligand>
</feature>
<feature type="binding site" evidence="1">
    <location>
        <position position="315"/>
    </location>
    <ligand>
        <name>N-formimidoyl-L-glutamate</name>
        <dbReference type="ChEBI" id="CHEBI:58928"/>
    </ligand>
</feature>
<feature type="binding site" evidence="1">
    <location>
        <position position="317"/>
    </location>
    <ligand>
        <name>N-formimidoyl-L-glutamate</name>
        <dbReference type="ChEBI" id="CHEBI:58928"/>
    </ligand>
</feature>
<feature type="binding site" evidence="1">
    <location>
        <position position="318"/>
    </location>
    <ligand>
        <name>4-imidazolone-5-propanoate</name>
        <dbReference type="ChEBI" id="CHEBI:77893"/>
    </ligand>
</feature>
<gene>
    <name evidence="1" type="primary">hutI</name>
    <name type="ordered locus">Bcen_5909</name>
</gene>
<comment type="function">
    <text evidence="1">Catalyzes the hydrolytic cleavage of the carbon-nitrogen bond in imidazolone-5-propanoate to yield N-formimidoyl-L-glutamate. It is the third step in the universal histidine degradation pathway.</text>
</comment>
<comment type="catalytic activity">
    <reaction evidence="1">
        <text>4-imidazolone-5-propanoate + H2O = N-formimidoyl-L-glutamate</text>
        <dbReference type="Rhea" id="RHEA:23660"/>
        <dbReference type="ChEBI" id="CHEBI:15377"/>
        <dbReference type="ChEBI" id="CHEBI:58928"/>
        <dbReference type="ChEBI" id="CHEBI:77893"/>
        <dbReference type="EC" id="3.5.2.7"/>
    </reaction>
</comment>
<comment type="cofactor">
    <cofactor evidence="1">
        <name>Zn(2+)</name>
        <dbReference type="ChEBI" id="CHEBI:29105"/>
    </cofactor>
    <cofactor evidence="1">
        <name>Fe(3+)</name>
        <dbReference type="ChEBI" id="CHEBI:29034"/>
    </cofactor>
    <text evidence="1">Binds 1 zinc or iron ion per subunit.</text>
</comment>
<comment type="pathway">
    <text evidence="1">Amino-acid degradation; L-histidine degradation into L-glutamate; N-formimidoyl-L-glutamate from L-histidine: step 3/3.</text>
</comment>
<comment type="subcellular location">
    <subcellularLocation>
        <location evidence="1">Cytoplasm</location>
    </subcellularLocation>
</comment>
<comment type="similarity">
    <text evidence="1">Belongs to the metallo-dependent hydrolases superfamily. HutI family.</text>
</comment>
<reference key="1">
    <citation type="submission" date="2006-05" db="EMBL/GenBank/DDBJ databases">
        <title>Complete sequence of chromosome 3 of Burkholderia cenocepacia AU 1054.</title>
        <authorList>
            <consortium name="US DOE Joint Genome Institute"/>
            <person name="Copeland A."/>
            <person name="Lucas S."/>
            <person name="Lapidus A."/>
            <person name="Barry K."/>
            <person name="Detter J.C."/>
            <person name="Glavina del Rio T."/>
            <person name="Hammon N."/>
            <person name="Israni S."/>
            <person name="Dalin E."/>
            <person name="Tice H."/>
            <person name="Pitluck S."/>
            <person name="Chain P."/>
            <person name="Malfatti S."/>
            <person name="Shin M."/>
            <person name="Vergez L."/>
            <person name="Schmutz J."/>
            <person name="Larimer F."/>
            <person name="Land M."/>
            <person name="Hauser L."/>
            <person name="Kyrpides N."/>
            <person name="Lykidis A."/>
            <person name="LiPuma J.J."/>
            <person name="Konstantinidis K."/>
            <person name="Tiedje J.M."/>
            <person name="Richardson P."/>
        </authorList>
    </citation>
    <scope>NUCLEOTIDE SEQUENCE [LARGE SCALE GENOMIC DNA]</scope>
    <source>
        <strain>AU 1054</strain>
    </source>
</reference>